<comment type="function">
    <text evidence="1">Heme chaperone required for the biogenesis of c-type cytochromes. Transiently binds heme delivered by CcmC and transfers the heme to apo-cytochromes in a process facilitated by CcmF and CcmH (By similarity).</text>
</comment>
<comment type="subcellular location">
    <subcellularLocation>
        <location evidence="4">Cell inner membrane</location>
        <topology evidence="4">Single-pass type II membrane protein</topology>
        <orientation evidence="4">Periplasmic side</orientation>
    </subcellularLocation>
</comment>
<comment type="similarity">
    <text evidence="4">Belongs to the CcmE/CycJ family.</text>
</comment>
<sequence length="161" mass="17358">MNPRRKKRLTLAVALIGGVAAIASLLLYALNSNLNLFYTPSEIVNGKTDTGVKPEAGQRIRVGGMVTVGSMVRDPNSLHVQFAVHDSLGGEILVTYDDLLPDLFREGQGIVAQGVLGEDGKLAATEVLAKHDENYMPPEVAEAMGQKHEKLDYSQQKSATQ</sequence>
<name>CCME_SHEON</name>
<dbReference type="EMBL" id="AF044582">
    <property type="protein sequence ID" value="AAC02697.1"/>
    <property type="molecule type" value="Genomic_DNA"/>
</dbReference>
<dbReference type="EMBL" id="AE014299">
    <property type="protein sequence ID" value="AAN53344.1"/>
    <property type="molecule type" value="Genomic_DNA"/>
</dbReference>
<dbReference type="RefSeq" id="NP_715899.1">
    <property type="nucleotide sequence ID" value="NC_004347.2"/>
</dbReference>
<dbReference type="RefSeq" id="WP_011070633.1">
    <property type="nucleotide sequence ID" value="NZ_CP053946.1"/>
</dbReference>
<dbReference type="PDB" id="1J6Q">
    <property type="method" value="NMR"/>
    <property type="chains" value="A=30-161"/>
</dbReference>
<dbReference type="PDB" id="1LM0">
    <property type="method" value="NMR"/>
    <property type="chains" value="A=30-161"/>
</dbReference>
<dbReference type="PDBsum" id="1J6Q"/>
<dbReference type="PDBsum" id="1LM0"/>
<dbReference type="BMRB" id="Q8EK44"/>
<dbReference type="SMR" id="Q8EK44"/>
<dbReference type="STRING" id="211586.SO_0259"/>
<dbReference type="PaxDb" id="211586-SO_0259"/>
<dbReference type="KEGG" id="son:SO_0259"/>
<dbReference type="PATRIC" id="fig|211586.12.peg.250"/>
<dbReference type="eggNOG" id="COG2332">
    <property type="taxonomic scope" value="Bacteria"/>
</dbReference>
<dbReference type="HOGENOM" id="CLU_079503_1_0_6"/>
<dbReference type="OrthoDB" id="9793584at2"/>
<dbReference type="PhylomeDB" id="Q8EK44"/>
<dbReference type="BioCyc" id="SONE211586:G1GMP-248-MONOMER"/>
<dbReference type="EvolutionaryTrace" id="Q8EK44"/>
<dbReference type="Proteomes" id="UP000008186">
    <property type="component" value="Chromosome"/>
</dbReference>
<dbReference type="GO" id="GO:0005886">
    <property type="term" value="C:plasma membrane"/>
    <property type="evidence" value="ECO:0007669"/>
    <property type="project" value="UniProtKB-SubCell"/>
</dbReference>
<dbReference type="GO" id="GO:0020037">
    <property type="term" value="F:heme binding"/>
    <property type="evidence" value="ECO:0007669"/>
    <property type="project" value="InterPro"/>
</dbReference>
<dbReference type="GO" id="GO:0046872">
    <property type="term" value="F:metal ion binding"/>
    <property type="evidence" value="ECO:0007669"/>
    <property type="project" value="UniProtKB-KW"/>
</dbReference>
<dbReference type="GO" id="GO:0017004">
    <property type="term" value="P:cytochrome complex assembly"/>
    <property type="evidence" value="ECO:0007669"/>
    <property type="project" value="UniProtKB-KW"/>
</dbReference>
<dbReference type="FunFam" id="2.40.50.140:FF:000104">
    <property type="entry name" value="Cytochrome c-type biogenesis protein CcmE"/>
    <property type="match status" value="1"/>
</dbReference>
<dbReference type="Gene3D" id="2.40.50.140">
    <property type="entry name" value="Nucleic acid-binding proteins"/>
    <property type="match status" value="1"/>
</dbReference>
<dbReference type="HAMAP" id="MF_01959">
    <property type="entry name" value="CcmE"/>
    <property type="match status" value="1"/>
</dbReference>
<dbReference type="InterPro" id="IPR004329">
    <property type="entry name" value="CcmE"/>
</dbReference>
<dbReference type="InterPro" id="IPR036127">
    <property type="entry name" value="CcmE-like_sf"/>
</dbReference>
<dbReference type="InterPro" id="IPR012340">
    <property type="entry name" value="NA-bd_OB-fold"/>
</dbReference>
<dbReference type="NCBIfam" id="NF009638">
    <property type="entry name" value="PRK13165.1"/>
    <property type="match status" value="1"/>
</dbReference>
<dbReference type="NCBIfam" id="NF009729">
    <property type="entry name" value="PRK13254.1-3"/>
    <property type="match status" value="1"/>
</dbReference>
<dbReference type="PANTHER" id="PTHR34128">
    <property type="entry name" value="CYTOCHROME C-TYPE BIOGENESIS PROTEIN CCME HOMOLOG, MITOCHONDRIAL"/>
    <property type="match status" value="1"/>
</dbReference>
<dbReference type="PANTHER" id="PTHR34128:SF2">
    <property type="entry name" value="CYTOCHROME C-TYPE BIOGENESIS PROTEIN CCME HOMOLOG, MITOCHONDRIAL"/>
    <property type="match status" value="1"/>
</dbReference>
<dbReference type="Pfam" id="PF03100">
    <property type="entry name" value="CcmE"/>
    <property type="match status" value="1"/>
</dbReference>
<dbReference type="SUPFAM" id="SSF82093">
    <property type="entry name" value="Heme chaperone CcmE"/>
    <property type="match status" value="1"/>
</dbReference>
<protein>
    <recommendedName>
        <fullName>Cytochrome c-type biogenesis protein CcmE</fullName>
    </recommendedName>
    <alternativeName>
        <fullName>Cytochrome c maturation protein E</fullName>
    </alternativeName>
    <alternativeName>
        <fullName>Heme chaperone CcmE</fullName>
    </alternativeName>
</protein>
<evidence type="ECO:0000250" key="1"/>
<evidence type="ECO:0000255" key="2"/>
<evidence type="ECO:0000256" key="3">
    <source>
        <dbReference type="SAM" id="MobiDB-lite"/>
    </source>
</evidence>
<evidence type="ECO:0000305" key="4"/>
<evidence type="ECO:0007829" key="5">
    <source>
        <dbReference type="PDB" id="1J6Q"/>
    </source>
</evidence>
<evidence type="ECO:0007829" key="6">
    <source>
        <dbReference type="PDB" id="1LM0"/>
    </source>
</evidence>
<gene>
    <name type="primary">ccmE</name>
    <name type="synonym">cycJ</name>
    <name type="ordered locus">SO_0259</name>
</gene>
<accession>Q8EK44</accession>
<accession>O52690</accession>
<keyword id="KW-0002">3D-structure</keyword>
<keyword id="KW-0997">Cell inner membrane</keyword>
<keyword id="KW-1003">Cell membrane</keyword>
<keyword id="KW-0201">Cytochrome c-type biogenesis</keyword>
<keyword id="KW-0349">Heme</keyword>
<keyword id="KW-0408">Iron</keyword>
<keyword id="KW-0472">Membrane</keyword>
<keyword id="KW-0479">Metal-binding</keyword>
<keyword id="KW-1185">Reference proteome</keyword>
<keyword id="KW-0735">Signal-anchor</keyword>
<keyword id="KW-0812">Transmembrane</keyword>
<keyword id="KW-1133">Transmembrane helix</keyword>
<reference key="1">
    <citation type="submission" date="1998-01" db="EMBL/GenBank/DDBJ databases">
        <title>Cytochrome c maturation in the metal reducer Shewanella putrefaciens.</title>
        <authorList>
            <person name="Saffarini D.A."/>
            <person name="McCool J."/>
            <person name="Tsongalis J."/>
        </authorList>
    </citation>
    <scope>NUCLEOTIDE SEQUENCE [GENOMIC DNA]</scope>
    <source>
        <strain>ATCC 700550 / JCM 31522 / CIP 106686 / LMG 19005 / NCIMB 14063 / MR-1</strain>
    </source>
</reference>
<reference key="2">
    <citation type="journal article" date="2002" name="Nat. Biotechnol.">
        <title>Genome sequence of the dissimilatory metal ion-reducing bacterium Shewanella oneidensis.</title>
        <authorList>
            <person name="Heidelberg J.F."/>
            <person name="Paulsen I.T."/>
            <person name="Nelson K.E."/>
            <person name="Gaidos E.J."/>
            <person name="Nelson W.C."/>
            <person name="Read T.D."/>
            <person name="Eisen J.A."/>
            <person name="Seshadri R."/>
            <person name="Ward N.L."/>
            <person name="Methe B.A."/>
            <person name="Clayton R.A."/>
            <person name="Meyer T."/>
            <person name="Tsapin A."/>
            <person name="Scott J."/>
            <person name="Beanan M.J."/>
            <person name="Brinkac L.M."/>
            <person name="Daugherty S.C."/>
            <person name="DeBoy R.T."/>
            <person name="Dodson R.J."/>
            <person name="Durkin A.S."/>
            <person name="Haft D.H."/>
            <person name="Kolonay J.F."/>
            <person name="Madupu R."/>
            <person name="Peterson J.D."/>
            <person name="Umayam L.A."/>
            <person name="White O."/>
            <person name="Wolf A.M."/>
            <person name="Vamathevan J.J."/>
            <person name="Weidman J.F."/>
            <person name="Impraim M."/>
            <person name="Lee K."/>
            <person name="Berry K.J."/>
            <person name="Lee C."/>
            <person name="Mueller J."/>
            <person name="Khouri H.M."/>
            <person name="Gill J."/>
            <person name="Utterback T.R."/>
            <person name="McDonald L.A."/>
            <person name="Feldblyum T.V."/>
            <person name="Smith H.O."/>
            <person name="Venter J.C."/>
            <person name="Nealson K.H."/>
            <person name="Fraser C.M."/>
        </authorList>
    </citation>
    <scope>NUCLEOTIDE SEQUENCE [LARGE SCALE GENOMIC DNA]</scope>
    <source>
        <strain>ATCC 700550 / JCM 31522 / CIP 106686 / LMG 19005 / NCIMB 14063 / MR-1</strain>
    </source>
</reference>
<reference key="3">
    <citation type="journal article" date="2002" name="Biochemistry">
        <title>Solution structure and characterization of the heme chaperone CcmE.</title>
        <authorList>
            <person name="Arnesano F."/>
            <person name="Banci L."/>
            <person name="Barker P.D."/>
            <person name="Bertini I."/>
            <person name="Rosato A."/>
            <person name="Su X.C."/>
            <person name="Viezzoli M.S."/>
        </authorList>
    </citation>
    <scope>STRUCTURE BY NMR OF 30-161</scope>
</reference>
<feature type="chain" id="PRO_0000238864" description="Cytochrome c-type biogenesis protein CcmE">
    <location>
        <begin position="1"/>
        <end position="161"/>
    </location>
</feature>
<feature type="topological domain" description="Cytoplasmic" evidence="2">
    <location>
        <begin position="1"/>
        <end position="8"/>
    </location>
</feature>
<feature type="transmembrane region" description="Helical; Signal-anchor for type II membrane protein" evidence="2">
    <location>
        <begin position="9"/>
        <end position="29"/>
    </location>
</feature>
<feature type="topological domain" description="Periplasmic" evidence="2">
    <location>
        <begin position="30"/>
        <end position="161"/>
    </location>
</feature>
<feature type="region of interest" description="Disordered" evidence="3">
    <location>
        <begin position="138"/>
        <end position="161"/>
    </location>
</feature>
<feature type="binding site" description="covalent" evidence="1">
    <location>
        <position position="131"/>
    </location>
    <ligand>
        <name>heme</name>
        <dbReference type="ChEBI" id="CHEBI:30413"/>
    </ligand>
</feature>
<feature type="binding site" description="axial binding residue" evidence="1">
    <location>
        <position position="135"/>
    </location>
    <ligand>
        <name>heme</name>
        <dbReference type="ChEBI" id="CHEBI:30413"/>
    </ligand>
    <ligandPart>
        <name>Fe</name>
        <dbReference type="ChEBI" id="CHEBI:18248"/>
    </ligandPart>
</feature>
<feature type="turn" evidence="5">
    <location>
        <begin position="40"/>
        <end position="46"/>
    </location>
</feature>
<feature type="turn" evidence="5">
    <location>
        <begin position="48"/>
        <end position="51"/>
    </location>
</feature>
<feature type="strand" evidence="5">
    <location>
        <begin position="52"/>
        <end position="54"/>
    </location>
</feature>
<feature type="strand" evidence="5">
    <location>
        <begin position="59"/>
        <end position="66"/>
    </location>
</feature>
<feature type="strand" evidence="5">
    <location>
        <begin position="80"/>
        <end position="85"/>
    </location>
</feature>
<feature type="strand" evidence="5">
    <location>
        <begin position="92"/>
        <end position="96"/>
    </location>
</feature>
<feature type="helix" evidence="6">
    <location>
        <begin position="101"/>
        <end position="103"/>
    </location>
</feature>
<feature type="strand" evidence="5">
    <location>
        <begin position="106"/>
        <end position="116"/>
    </location>
</feature>
<feature type="strand" evidence="5">
    <location>
        <begin position="121"/>
        <end position="128"/>
    </location>
</feature>
<proteinExistence type="evidence at protein level"/>
<organism>
    <name type="scientific">Shewanella oneidensis (strain ATCC 700550 / JCM 31522 / CIP 106686 / LMG 19005 / NCIMB 14063 / MR-1)</name>
    <dbReference type="NCBI Taxonomy" id="211586"/>
    <lineage>
        <taxon>Bacteria</taxon>
        <taxon>Pseudomonadati</taxon>
        <taxon>Pseudomonadota</taxon>
        <taxon>Gammaproteobacteria</taxon>
        <taxon>Alteromonadales</taxon>
        <taxon>Shewanellaceae</taxon>
        <taxon>Shewanella</taxon>
    </lineage>
</organism>